<keyword id="KW-1003">Cell membrane</keyword>
<keyword id="KW-1015">Disulfide bond</keyword>
<keyword id="KW-0325">Glycoprotein</keyword>
<keyword id="KW-0336">GPI-anchor</keyword>
<keyword id="KW-0449">Lipoprotein</keyword>
<keyword id="KW-0461">Malaria</keyword>
<keyword id="KW-0472">Membrane</keyword>
<keyword id="KW-1185">Reference proteome</keyword>
<keyword id="KW-0677">Repeat</keyword>
<keyword id="KW-0732">Signal</keyword>
<reference key="1">
    <citation type="journal article" date="2002" name="Nature">
        <title>Genome sequence of the human malaria parasite Plasmodium falciparum.</title>
        <authorList>
            <person name="Gardner M.J."/>
            <person name="Hall N."/>
            <person name="Fung E."/>
            <person name="White O."/>
            <person name="Berriman M."/>
            <person name="Hyman R.W."/>
            <person name="Carlton J.M."/>
            <person name="Pain A."/>
            <person name="Nelson K.E."/>
            <person name="Bowman S."/>
            <person name="Paulsen I.T."/>
            <person name="James K.D."/>
            <person name="Eisen J.A."/>
            <person name="Rutherford K.M."/>
            <person name="Salzberg S.L."/>
            <person name="Craig A."/>
            <person name="Kyes S."/>
            <person name="Chan M.-S."/>
            <person name="Nene V."/>
            <person name="Shallom S.J."/>
            <person name="Suh B."/>
            <person name="Peterson J."/>
            <person name="Angiuoli S."/>
            <person name="Pertea M."/>
            <person name="Allen J."/>
            <person name="Selengut J."/>
            <person name="Haft D."/>
            <person name="Mather M.W."/>
            <person name="Vaidya A.B."/>
            <person name="Martin D.M.A."/>
            <person name="Fairlamb A.H."/>
            <person name="Fraunholz M.J."/>
            <person name="Roos D.S."/>
            <person name="Ralph S.A."/>
            <person name="McFadden G.I."/>
            <person name="Cummings L.M."/>
            <person name="Subramanian G.M."/>
            <person name="Mungall C."/>
            <person name="Venter J.C."/>
            <person name="Carucci D.J."/>
            <person name="Hoffman S.L."/>
            <person name="Newbold C."/>
            <person name="Davis R.W."/>
            <person name="Fraser C.M."/>
            <person name="Barrell B.G."/>
        </authorList>
    </citation>
    <scope>NUCLEOTIDE SEQUENCE [LARGE SCALE GENOMIC DNA]</scope>
    <source>
        <strain>3D7</strain>
    </source>
</reference>
<reference key="2">
    <citation type="journal article" date="2002" name="Nature">
        <title>Sequence of Plasmodium falciparum chromosomes 1, 3-9 and 13.</title>
        <authorList>
            <person name="Hall N."/>
            <person name="Pain A."/>
            <person name="Berriman M."/>
            <person name="Churcher C.M."/>
            <person name="Harris B."/>
            <person name="Harris D."/>
            <person name="Mungall K.L."/>
            <person name="Bowman S."/>
            <person name="Atkin R."/>
            <person name="Baker S."/>
            <person name="Barron A."/>
            <person name="Brooks K."/>
            <person name="Buckee C.O."/>
            <person name="Burrows C."/>
            <person name="Cherevach I."/>
            <person name="Chillingworth C."/>
            <person name="Chillingworth T."/>
            <person name="Christodoulou Z."/>
            <person name="Clark L."/>
            <person name="Clark R."/>
            <person name="Corton C."/>
            <person name="Cronin A."/>
            <person name="Davies R.M."/>
            <person name="Davis P."/>
            <person name="Dear P."/>
            <person name="Dearden F."/>
            <person name="Doggett J."/>
            <person name="Feltwell T."/>
            <person name="Goble A."/>
            <person name="Goodhead I."/>
            <person name="Gwilliam R."/>
            <person name="Hamlin N."/>
            <person name="Hance Z."/>
            <person name="Harper D."/>
            <person name="Hauser H."/>
            <person name="Hornsby T."/>
            <person name="Holroyd S."/>
            <person name="Horrocks P."/>
            <person name="Humphray S."/>
            <person name="Jagels K."/>
            <person name="James K.D."/>
            <person name="Johnson D."/>
            <person name="Kerhornou A."/>
            <person name="Knights A."/>
            <person name="Konfortov B."/>
            <person name="Kyes S."/>
            <person name="Larke N."/>
            <person name="Lawson D."/>
            <person name="Lennard N."/>
            <person name="Line A."/>
            <person name="Maddison M."/>
            <person name="Mclean J."/>
            <person name="Mooney P."/>
            <person name="Moule S."/>
            <person name="Murphy L."/>
            <person name="Oliver K."/>
            <person name="Ormond D."/>
            <person name="Price C."/>
            <person name="Quail M.A."/>
            <person name="Rabbinowitsch E."/>
            <person name="Rajandream M.A."/>
            <person name="Rutter S."/>
            <person name="Rutherford K.M."/>
            <person name="Sanders M."/>
            <person name="Simmonds M."/>
            <person name="Seeger K."/>
            <person name="Sharp S."/>
            <person name="Smith R."/>
            <person name="Squares R."/>
            <person name="Squares S."/>
            <person name="Stevens K."/>
            <person name="Taylor K."/>
            <person name="Tivey A."/>
            <person name="Unwin L."/>
            <person name="Whitehead S."/>
            <person name="Woodward J.R."/>
            <person name="Sulston J.E."/>
            <person name="Craig A."/>
            <person name="Newbold C."/>
            <person name="Barrell B.G."/>
        </authorList>
    </citation>
    <scope>NUCLEOTIDE SEQUENCE [LARGE SCALE GENOMIC DNA]</scope>
    <source>
        <strain>3D7</strain>
    </source>
</reference>
<reference key="3">
    <citation type="journal article" date="2005" name="J. Biol. Chem.">
        <title>Distinct protein classes including novel merozoite surface antigens in Raft-like membranes of Plasmodium falciparum.</title>
        <authorList>
            <person name="Sanders P.R."/>
            <person name="Gilson P.R."/>
            <person name="Cantin G.T."/>
            <person name="Greenbaum D.C."/>
            <person name="Nebl T."/>
            <person name="Carucci D.J."/>
            <person name="McConville M.J."/>
            <person name="Schofield L."/>
            <person name="Hodder A.N."/>
            <person name="Yates J.R. III"/>
            <person name="Crabb B.S."/>
        </authorList>
    </citation>
    <scope>SUBCELLULAR LOCATION</scope>
    <scope>DEVELOPMENTAL STAGE</scope>
</reference>
<reference key="4">
    <citation type="journal article" date="2006" name="Mol. Cell. Proteomics">
        <title>Identification and stoichiometry of glycosylphosphatidylinositol-anchored membrane proteins of the human malaria parasite Plasmodium falciparum.</title>
        <authorList>
            <person name="Gilson P.R."/>
            <person name="Nebl T."/>
            <person name="Vukcevic D."/>
            <person name="Moritz R.L."/>
            <person name="Sargeant T."/>
            <person name="Speed T.P."/>
            <person name="Schofield L."/>
            <person name="Crabb B.S."/>
        </authorList>
    </citation>
    <scope>GPI-ANCHOR</scope>
</reference>
<protein>
    <recommendedName>
        <fullName>Merozoite surface protein P38</fullName>
    </recommendedName>
</protein>
<organism>
    <name type="scientific">Plasmodium falciparum (isolate 3D7)</name>
    <dbReference type="NCBI Taxonomy" id="36329"/>
    <lineage>
        <taxon>Eukaryota</taxon>
        <taxon>Sar</taxon>
        <taxon>Alveolata</taxon>
        <taxon>Apicomplexa</taxon>
        <taxon>Aconoidasida</taxon>
        <taxon>Haemosporida</taxon>
        <taxon>Plasmodiidae</taxon>
        <taxon>Plasmodium</taxon>
        <taxon>Plasmodium (Laverania)</taxon>
    </lineage>
</organism>
<evidence type="ECO:0000250" key="1"/>
<evidence type="ECO:0000255" key="2"/>
<evidence type="ECO:0000269" key="3">
    <source>
    </source>
</evidence>
<name>PF38_PLAF7</name>
<sequence>MKRWSIITGIVIIFCILTCKGQVENKKVDFRTEKGKFVPLNLVPGDVVEYSCPYSLNNDIRNMNGVEREHFDNKKFCFDYIFVGSKLTFLKEYVRGSYNVVHKEEGNLYTSQFSVPPVVLTHRNFDCFCYMEENNVVVKKVLRIHISNGVLRKIPGCDFNADYKESTAITTFSNMSPRRVKVCDVYPKSGDFISLMCPSDYSIKPDGCFSNVYVKRYPNEEVKEEDRFNLNRKWDASKYNVVSIETVLKMNMITQGDKYSIFSKLPDVKDQVDFTCICQSNDEQDNLMMNVYINNTSYLTNNTRSIGVNKHSFSNSEIFERIEREEISFAFSSYLSITLILLYLFFLNF</sequence>
<feature type="signal peptide" evidence="2">
    <location>
        <begin position="1"/>
        <end position="21"/>
    </location>
</feature>
<feature type="chain" id="PRO_0000423566" description="Merozoite surface protein P38">
    <location>
        <begin position="22"/>
        <end position="315"/>
    </location>
</feature>
<feature type="propeptide" id="PRO_0000423567" description="Removed in mature form" evidence="2">
    <location>
        <begin position="316"/>
        <end position="349"/>
    </location>
</feature>
<feature type="domain" description="6-Cys 1">
    <location>
        <begin position="22"/>
        <end position="149"/>
    </location>
</feature>
<feature type="domain" description="6-Cys 2">
    <location>
        <begin position="153"/>
        <end position="301"/>
    </location>
</feature>
<feature type="lipid moiety-binding region" description="GPI-anchor amidated asparagine" evidence="2">
    <location>
        <position position="315"/>
    </location>
</feature>
<feature type="glycosylation site" description="N-linked (GlcNAc...) asparagine" evidence="2">
    <location>
        <position position="294"/>
    </location>
</feature>
<feature type="glycosylation site" description="N-linked (GlcNAc...) asparagine" evidence="2">
    <location>
        <position position="295"/>
    </location>
</feature>
<feature type="glycosylation site" description="N-linked (GlcNAc...) asparagine" evidence="2">
    <location>
        <position position="301"/>
    </location>
</feature>
<feature type="disulfide bond" evidence="1">
    <location>
        <begin position="77"/>
        <end position="127"/>
    </location>
</feature>
<feature type="disulfide bond" evidence="1">
    <location>
        <begin position="157"/>
        <end position="183"/>
    </location>
</feature>
<feature type="disulfide bond" evidence="1">
    <location>
        <begin position="197"/>
        <end position="278"/>
    </location>
</feature>
<feature type="disulfide bond" evidence="1">
    <location>
        <begin position="208"/>
        <end position="276"/>
    </location>
</feature>
<comment type="subcellular location">
    <subcellularLocation>
        <location evidence="3">Cell surface</location>
    </subcellularLocation>
    <subcellularLocation>
        <location evidence="3">Cell membrane</location>
        <topology evidence="3">Lipid-anchor</topology>
        <topology evidence="3">GPI-anchor</topology>
    </subcellularLocation>
    <text>Present on the surface of merozoite.</text>
</comment>
<comment type="developmental stage">
    <text evidence="3">Localizes to the merozoite surface. Mostly concentrated in secretory organelles at the apical end of the parasite, exclusively at an early stage of schizont development. Probably localizes in the rhoptry organelles.</text>
</comment>
<proteinExistence type="evidence at protein level"/>
<dbReference type="EMBL" id="AL844504">
    <property type="protein sequence ID" value="CAD51445.1"/>
    <property type="molecule type" value="Genomic_DNA"/>
</dbReference>
<dbReference type="RefSeq" id="XP_001351638.1">
    <property type="nucleotide sequence ID" value="XM_001351602.1"/>
</dbReference>
<dbReference type="SMR" id="Q8I423"/>
<dbReference type="BioGRID" id="1208187">
    <property type="interactions" value="1"/>
</dbReference>
<dbReference type="FunCoup" id="Q8I423">
    <property type="interactions" value="679"/>
</dbReference>
<dbReference type="IntAct" id="Q8I423">
    <property type="interactions" value="1"/>
</dbReference>
<dbReference type="STRING" id="36329.Q8I423"/>
<dbReference type="GlyCosmos" id="Q8I423">
    <property type="glycosylation" value="3 sites, No reported glycans"/>
</dbReference>
<dbReference type="SwissPalm" id="Q8I423"/>
<dbReference type="PaxDb" id="5833-PFE0395c"/>
<dbReference type="EnsemblProtists" id="CAD51445">
    <property type="protein sequence ID" value="CAD51445"/>
    <property type="gene ID" value="PF3D7_0508000"/>
</dbReference>
<dbReference type="KEGG" id="pfa:PF3D7_0508000"/>
<dbReference type="VEuPathDB" id="PlasmoDB:PF3D7_0508000"/>
<dbReference type="HOGENOM" id="CLU_781861_0_0_1"/>
<dbReference type="InParanoid" id="Q8I423"/>
<dbReference type="OMA" id="FECYCYM"/>
<dbReference type="OrthoDB" id="380997at2759"/>
<dbReference type="PhylomeDB" id="Q8I423"/>
<dbReference type="Proteomes" id="UP000001450">
    <property type="component" value="Chromosome 5"/>
</dbReference>
<dbReference type="GO" id="GO:0009986">
    <property type="term" value="C:cell surface"/>
    <property type="evidence" value="ECO:0007669"/>
    <property type="project" value="UniProtKB-SubCell"/>
</dbReference>
<dbReference type="GO" id="GO:0005886">
    <property type="term" value="C:plasma membrane"/>
    <property type="evidence" value="ECO:0007669"/>
    <property type="project" value="UniProtKB-SubCell"/>
</dbReference>
<dbReference type="GO" id="GO:0098552">
    <property type="term" value="C:side of membrane"/>
    <property type="evidence" value="ECO:0007669"/>
    <property type="project" value="UniProtKB-KW"/>
</dbReference>
<dbReference type="FunFam" id="2.60.40.2860:FF:000006">
    <property type="entry name" value="6-cysteine protein"/>
    <property type="match status" value="1"/>
</dbReference>
<dbReference type="FunFam" id="2.60.40.2860:FF:000008">
    <property type="entry name" value="6-cysteine protein"/>
    <property type="match status" value="1"/>
</dbReference>
<dbReference type="Gene3D" id="2.60.40.2860">
    <property type="match status" value="2"/>
</dbReference>
<dbReference type="InterPro" id="IPR010884">
    <property type="entry name" value="6_CYS_dom"/>
</dbReference>
<dbReference type="InterPro" id="IPR038160">
    <property type="entry name" value="6_CYS_dom_sf"/>
</dbReference>
<dbReference type="InterPro" id="IPR051444">
    <property type="entry name" value="Parasite_Repro/Invasion_Surf"/>
</dbReference>
<dbReference type="PANTHER" id="PTHR38796">
    <property type="match status" value="1"/>
</dbReference>
<dbReference type="PANTHER" id="PTHR38796:SF1">
    <property type="entry name" value="ANCHORED PROTEIN, PUTATIVE (AFU_ORTHOLOGUE AFUA_4G09600)-RELATED"/>
    <property type="match status" value="1"/>
</dbReference>
<dbReference type="Pfam" id="PF07422">
    <property type="entry name" value="s48_45"/>
    <property type="match status" value="1"/>
</dbReference>
<dbReference type="SMART" id="SM00970">
    <property type="entry name" value="s48_45"/>
    <property type="match status" value="1"/>
</dbReference>
<dbReference type="PROSITE" id="PS51701">
    <property type="entry name" value="6_CYS"/>
    <property type="match status" value="2"/>
</dbReference>
<accession>Q8I423</accession>
<gene>
    <name type="primary">PFS38</name>
    <name type="synonym">PF38</name>
    <name type="ORF">PFE0395c</name>
</gene>